<proteinExistence type="inferred from homology"/>
<protein>
    <recommendedName>
        <fullName>Golgi anti-apoptotic protein</fullName>
        <shortName>GAAP</shortName>
    </recommendedName>
</protein>
<name>GAAP_VACC0</name>
<organism>
    <name type="scientific">Vaccinia virus (strain LC16m0)</name>
    <name type="common">VACV</name>
    <dbReference type="NCBI Taxonomy" id="10246"/>
    <lineage>
        <taxon>Viruses</taxon>
        <taxon>Varidnaviria</taxon>
        <taxon>Bamfordvirae</taxon>
        <taxon>Nucleocytoviricota</taxon>
        <taxon>Pokkesviricetes</taxon>
        <taxon>Chitovirales</taxon>
        <taxon>Poxviridae</taxon>
        <taxon>Chordopoxvirinae</taxon>
        <taxon>Orthopoxvirus</taxon>
        <taxon>Vaccinia virus</taxon>
    </lineage>
</organism>
<keyword id="KW-0053">Apoptosis</keyword>
<keyword id="KW-1040">Host Golgi apparatus</keyword>
<keyword id="KW-1043">Host membrane</keyword>
<keyword id="KW-0472">Membrane</keyword>
<keyword id="KW-0812">Transmembrane</keyword>
<keyword id="KW-1133">Transmembrane helix</keyword>
<evidence type="ECO:0000250" key="1">
    <source>
        <dbReference type="UniProtKB" id="P0DXN1"/>
    </source>
</evidence>
<evidence type="ECO:0000255" key="2"/>
<evidence type="ECO:0000305" key="3"/>
<organismHost>
    <name type="scientific">Homo sapiens</name>
    <name type="common">Human</name>
    <dbReference type="NCBI Taxonomy" id="9606"/>
</organismHost>
<comment type="function">
    <text evidence="1">May affect virulence through inhibition of apoptosis.</text>
</comment>
<comment type="subcellular location">
    <subcellularLocation>
        <location evidence="1">Host Golgi apparatus membrane</location>
        <topology evidence="1">Multi-pass membrane protein</topology>
    </subcellularLocation>
</comment>
<comment type="similarity">
    <text evidence="3">Belongs to the BI1 family. LFG subfamily.</text>
</comment>
<accession>P0DXN2</accession>
<accession>Q49P94</accession>
<feature type="chain" id="PRO_0000461178" description="Golgi anti-apoptotic protein">
    <location>
        <begin position="1"/>
        <end position="237"/>
    </location>
</feature>
<feature type="topological domain" description="Cytoplasmic" evidence="2">
    <location>
        <begin position="1"/>
        <end position="37"/>
    </location>
</feature>
<feature type="transmembrane region" description="Helical" evidence="2">
    <location>
        <begin position="38"/>
        <end position="58"/>
    </location>
</feature>
<feature type="topological domain" description="Lumenal" evidence="2">
    <location>
        <begin position="59"/>
        <end position="67"/>
    </location>
</feature>
<feature type="transmembrane region" description="Helical" evidence="2">
    <location>
        <begin position="68"/>
        <end position="88"/>
    </location>
</feature>
<feature type="topological domain" description="Cytoplasmic" evidence="2">
    <location>
        <begin position="89"/>
        <end position="94"/>
    </location>
</feature>
<feature type="transmembrane region" description="Helical" evidence="2">
    <location>
        <begin position="95"/>
        <end position="115"/>
    </location>
</feature>
<feature type="topological domain" description="Lumenal" evidence="2">
    <location>
        <position position="116"/>
    </location>
</feature>
<feature type="transmembrane region" description="Helical" evidence="2">
    <location>
        <begin position="117"/>
        <end position="137"/>
    </location>
</feature>
<feature type="topological domain" description="Cytoplasmic" evidence="2">
    <location>
        <begin position="138"/>
        <end position="151"/>
    </location>
</feature>
<feature type="transmembrane region" description="Helical" evidence="2">
    <location>
        <begin position="152"/>
        <end position="172"/>
    </location>
</feature>
<feature type="topological domain" description="Lumenal" evidence="2">
    <location>
        <begin position="173"/>
        <end position="174"/>
    </location>
</feature>
<feature type="transmembrane region" description="Helical" evidence="2">
    <location>
        <begin position="175"/>
        <end position="195"/>
    </location>
</feature>
<feature type="topological domain" description="Cytoplasmic" evidence="2">
    <location>
        <begin position="196"/>
        <end position="209"/>
    </location>
</feature>
<feature type="intramembrane region" description="Helical" evidence="2">
    <location>
        <begin position="210"/>
        <end position="230"/>
    </location>
</feature>
<feature type="topological domain" description="Cytoplasmic" evidence="2">
    <location>
        <begin position="231"/>
        <end position="237"/>
    </location>
</feature>
<gene>
    <name type="primary">L6</name>
    <name type="ordered locus">List196</name>
</gene>
<sequence>MAMPSLSACSSIEDDFNYGSSVASASVHIRMAFLRKVYGILCLQFLLTTATTAVFLYFDCMRTFIQGSPVLILASMFGSIGLIFALTLHRHKHPLNLYLLCGFTLSESLTLASVVTFYDVHVVMQAFMLTTAAFLALTTYTLQSKRDFSKLGAGLFAALWILILSGLLGIFVQNETVKLVLSAFGALVFCGFIIYDTHSLIHKLSPEEYVLASINLYLDIINLFLHLLQLLEVSNKK</sequence>
<reference key="1">
    <citation type="journal article" date="2005" name="J. Virol.">
        <title>An attenuated LC16m8 smallpox vaccine: analysis of full-genome sequence and induction of immune protection.</title>
        <authorList>
            <person name="Morikawa S."/>
            <person name="Sakiyama T."/>
            <person name="Hasegawa H."/>
            <person name="Saijo M."/>
            <person name="Maeda A."/>
            <person name="Kurane I."/>
            <person name="Maeno G."/>
            <person name="Kimura J."/>
            <person name="Hirama C."/>
            <person name="Yoshida T."/>
            <person name="Asahi-Ozaki Y."/>
            <person name="Sata T."/>
            <person name="Kurata T."/>
            <person name="Kojima A."/>
        </authorList>
    </citation>
    <scope>NUCLEOTIDE SEQUENCE [LARGE SCALE GENOMIC DNA]</scope>
    <source>
        <strain>LC16mO</strain>
    </source>
</reference>
<dbReference type="EMBL" id="AY678277">
    <property type="protein sequence ID" value="AAW23932.1"/>
    <property type="molecule type" value="Genomic_DNA"/>
</dbReference>
<dbReference type="SMR" id="P0DXN2"/>
<dbReference type="Proteomes" id="UP000171434">
    <property type="component" value="Segment"/>
</dbReference>
<dbReference type="GO" id="GO:0044178">
    <property type="term" value="C:host cell Golgi membrane"/>
    <property type="evidence" value="ECO:0007669"/>
    <property type="project" value="UniProtKB-SubCell"/>
</dbReference>
<dbReference type="GO" id="GO:0016020">
    <property type="term" value="C:membrane"/>
    <property type="evidence" value="ECO:0007669"/>
    <property type="project" value="UniProtKB-KW"/>
</dbReference>
<dbReference type="GO" id="GO:0043066">
    <property type="term" value="P:negative regulation of apoptotic process"/>
    <property type="evidence" value="ECO:0007669"/>
    <property type="project" value="TreeGrafter"/>
</dbReference>
<dbReference type="InterPro" id="IPR006214">
    <property type="entry name" value="Bax_inhibitor_1-related"/>
</dbReference>
<dbReference type="PANTHER" id="PTHR23291">
    <property type="entry name" value="BAX INHIBITOR-RELATED"/>
    <property type="match status" value="1"/>
</dbReference>
<dbReference type="PANTHER" id="PTHR23291:SF50">
    <property type="entry name" value="PROTEIN LIFEGUARD 4"/>
    <property type="match status" value="1"/>
</dbReference>
<dbReference type="Pfam" id="PF01027">
    <property type="entry name" value="Bax1-I"/>
    <property type="match status" value="1"/>
</dbReference>